<reference key="1">
    <citation type="journal article" date="2004" name="J. Mol. Microbiol. Biotechnol.">
        <title>The complete genome sequence of Bacillus licheniformis DSM13, an organism with great industrial potential.</title>
        <authorList>
            <person name="Veith B."/>
            <person name="Herzberg C."/>
            <person name="Steckel S."/>
            <person name="Feesche J."/>
            <person name="Maurer K.H."/>
            <person name="Ehrenreich P."/>
            <person name="Baeumer S."/>
            <person name="Henne A."/>
            <person name="Liesegang H."/>
            <person name="Merkl R."/>
            <person name="Ehrenreich A."/>
            <person name="Gottschalk G."/>
        </authorList>
    </citation>
    <scope>NUCLEOTIDE SEQUENCE [LARGE SCALE GENOMIC DNA]</scope>
    <source>
        <strain>ATCC 14580 / DSM 13 / JCM 2505 / CCUG 7422 / NBRC 12200 / NCIMB 9375 / NCTC 10341 / NRRL NRS-1264 / Gibson 46</strain>
    </source>
</reference>
<reference key="2">
    <citation type="journal article" date="2004" name="Genome Biol.">
        <title>Complete genome sequence of the industrial bacterium Bacillus licheniformis and comparisons with closely related Bacillus species.</title>
        <authorList>
            <person name="Rey M.W."/>
            <person name="Ramaiya P."/>
            <person name="Nelson B.A."/>
            <person name="Brody-Karpin S.D."/>
            <person name="Zaretsky E.J."/>
            <person name="Tang M."/>
            <person name="Lopez de Leon A."/>
            <person name="Xiang H."/>
            <person name="Gusti V."/>
            <person name="Clausen I.G."/>
            <person name="Olsen P.B."/>
            <person name="Rasmussen M.D."/>
            <person name="Andersen J.T."/>
            <person name="Joergensen P.L."/>
            <person name="Larsen T.S."/>
            <person name="Sorokin A."/>
            <person name="Bolotin A."/>
            <person name="Lapidus A."/>
            <person name="Galleron N."/>
            <person name="Ehrlich S.D."/>
            <person name="Berka R.M."/>
        </authorList>
    </citation>
    <scope>NUCLEOTIDE SEQUENCE [LARGE SCALE GENOMIC DNA]</scope>
    <source>
        <strain>ATCC 14580 / DSM 13 / JCM 2505 / CCUG 7422 / NBRC 12200 / NCIMB 9375 / NCTC 10341 / NRRL NRS-1264 / Gibson 46</strain>
    </source>
</reference>
<accession>Q65H75</accession>
<accession>Q62SN3</accession>
<keyword id="KW-0030">Aminoacyl-tRNA synthetase</keyword>
<keyword id="KW-0067">ATP-binding</keyword>
<keyword id="KW-0963">Cytoplasm</keyword>
<keyword id="KW-0436">Ligase</keyword>
<keyword id="KW-0547">Nucleotide-binding</keyword>
<keyword id="KW-0648">Protein biosynthesis</keyword>
<keyword id="KW-1185">Reference proteome</keyword>
<gene>
    <name evidence="1" type="primary">glyQ</name>
    <name type="ordered locus">BLi02718</name>
    <name type="ordered locus">BL03676</name>
</gene>
<evidence type="ECO:0000255" key="1">
    <source>
        <dbReference type="HAMAP-Rule" id="MF_00254"/>
    </source>
</evidence>
<feature type="chain" id="PRO_1000047398" description="Glycine--tRNA ligase alpha subunit">
    <location>
        <begin position="1"/>
        <end position="295"/>
    </location>
</feature>
<proteinExistence type="inferred from homology"/>
<dbReference type="EC" id="6.1.1.14" evidence="1"/>
<dbReference type="EMBL" id="CP000002">
    <property type="protein sequence ID" value="AAU24226.1"/>
    <property type="molecule type" value="Genomic_DNA"/>
</dbReference>
<dbReference type="EMBL" id="AE017333">
    <property type="protein sequence ID" value="AAU41589.1"/>
    <property type="molecule type" value="Genomic_DNA"/>
</dbReference>
<dbReference type="RefSeq" id="WP_003183621.1">
    <property type="nucleotide sequence ID" value="NC_006322.1"/>
</dbReference>
<dbReference type="SMR" id="Q65H75"/>
<dbReference type="STRING" id="279010.BL03676"/>
<dbReference type="GeneID" id="92860692"/>
<dbReference type="KEGG" id="bld:BLi02718"/>
<dbReference type="KEGG" id="bli:BL03676"/>
<dbReference type="eggNOG" id="COG0752">
    <property type="taxonomic scope" value="Bacteria"/>
</dbReference>
<dbReference type="HOGENOM" id="CLU_057066_1_0_9"/>
<dbReference type="Proteomes" id="UP000000606">
    <property type="component" value="Chromosome"/>
</dbReference>
<dbReference type="GO" id="GO:0005829">
    <property type="term" value="C:cytosol"/>
    <property type="evidence" value="ECO:0007669"/>
    <property type="project" value="TreeGrafter"/>
</dbReference>
<dbReference type="GO" id="GO:0005524">
    <property type="term" value="F:ATP binding"/>
    <property type="evidence" value="ECO:0007669"/>
    <property type="project" value="UniProtKB-UniRule"/>
</dbReference>
<dbReference type="GO" id="GO:0140096">
    <property type="term" value="F:catalytic activity, acting on a protein"/>
    <property type="evidence" value="ECO:0007669"/>
    <property type="project" value="UniProtKB-ARBA"/>
</dbReference>
<dbReference type="GO" id="GO:0004820">
    <property type="term" value="F:glycine-tRNA ligase activity"/>
    <property type="evidence" value="ECO:0007669"/>
    <property type="project" value="UniProtKB-UniRule"/>
</dbReference>
<dbReference type="GO" id="GO:0016740">
    <property type="term" value="F:transferase activity"/>
    <property type="evidence" value="ECO:0007669"/>
    <property type="project" value="UniProtKB-ARBA"/>
</dbReference>
<dbReference type="GO" id="GO:0006426">
    <property type="term" value="P:glycyl-tRNA aminoacylation"/>
    <property type="evidence" value="ECO:0007669"/>
    <property type="project" value="UniProtKB-UniRule"/>
</dbReference>
<dbReference type="CDD" id="cd00733">
    <property type="entry name" value="GlyRS_alpha_core"/>
    <property type="match status" value="1"/>
</dbReference>
<dbReference type="FunFam" id="3.30.930.10:FF:000006">
    <property type="entry name" value="Glycine--tRNA ligase alpha subunit"/>
    <property type="match status" value="1"/>
</dbReference>
<dbReference type="Gene3D" id="3.30.930.10">
    <property type="entry name" value="Bira Bifunctional Protein, Domain 2"/>
    <property type="match status" value="1"/>
</dbReference>
<dbReference type="Gene3D" id="1.20.58.180">
    <property type="entry name" value="Class II aaRS and biotin synthetases, domain 2"/>
    <property type="match status" value="1"/>
</dbReference>
<dbReference type="HAMAP" id="MF_00254">
    <property type="entry name" value="Gly_tRNA_synth_alpha"/>
    <property type="match status" value="1"/>
</dbReference>
<dbReference type="InterPro" id="IPR045864">
    <property type="entry name" value="aa-tRNA-synth_II/BPL/LPL"/>
</dbReference>
<dbReference type="InterPro" id="IPR006194">
    <property type="entry name" value="Gly-tRNA-synth_heterodimer"/>
</dbReference>
<dbReference type="InterPro" id="IPR002310">
    <property type="entry name" value="Gly-tRNA_ligase_asu"/>
</dbReference>
<dbReference type="NCBIfam" id="TIGR00388">
    <property type="entry name" value="glyQ"/>
    <property type="match status" value="1"/>
</dbReference>
<dbReference type="NCBIfam" id="NF006827">
    <property type="entry name" value="PRK09348.1"/>
    <property type="match status" value="1"/>
</dbReference>
<dbReference type="PANTHER" id="PTHR30075:SF2">
    <property type="entry name" value="GLYCINE--TRNA LIGASE, CHLOROPLASTIC_MITOCHONDRIAL 2"/>
    <property type="match status" value="1"/>
</dbReference>
<dbReference type="PANTHER" id="PTHR30075">
    <property type="entry name" value="GLYCYL-TRNA SYNTHETASE"/>
    <property type="match status" value="1"/>
</dbReference>
<dbReference type="Pfam" id="PF02091">
    <property type="entry name" value="tRNA-synt_2e"/>
    <property type="match status" value="1"/>
</dbReference>
<dbReference type="PRINTS" id="PR01044">
    <property type="entry name" value="TRNASYNTHGA"/>
</dbReference>
<dbReference type="SUPFAM" id="SSF55681">
    <property type="entry name" value="Class II aaRS and biotin synthetases"/>
    <property type="match status" value="1"/>
</dbReference>
<dbReference type="PROSITE" id="PS50861">
    <property type="entry name" value="AA_TRNA_LIGASE_II_GLYAB"/>
    <property type="match status" value="1"/>
</dbReference>
<organism>
    <name type="scientific">Bacillus licheniformis (strain ATCC 14580 / DSM 13 / JCM 2505 / CCUG 7422 / NBRC 12200 / NCIMB 9375 / NCTC 10341 / NRRL NRS-1264 / Gibson 46)</name>
    <dbReference type="NCBI Taxonomy" id="279010"/>
    <lineage>
        <taxon>Bacteria</taxon>
        <taxon>Bacillati</taxon>
        <taxon>Bacillota</taxon>
        <taxon>Bacilli</taxon>
        <taxon>Bacillales</taxon>
        <taxon>Bacillaceae</taxon>
        <taxon>Bacillus</taxon>
    </lineage>
</organism>
<name>SYGA_BACLD</name>
<comment type="catalytic activity">
    <reaction evidence="1">
        <text>tRNA(Gly) + glycine + ATP = glycyl-tRNA(Gly) + AMP + diphosphate</text>
        <dbReference type="Rhea" id="RHEA:16013"/>
        <dbReference type="Rhea" id="RHEA-COMP:9664"/>
        <dbReference type="Rhea" id="RHEA-COMP:9683"/>
        <dbReference type="ChEBI" id="CHEBI:30616"/>
        <dbReference type="ChEBI" id="CHEBI:33019"/>
        <dbReference type="ChEBI" id="CHEBI:57305"/>
        <dbReference type="ChEBI" id="CHEBI:78442"/>
        <dbReference type="ChEBI" id="CHEBI:78522"/>
        <dbReference type="ChEBI" id="CHEBI:456215"/>
        <dbReference type="EC" id="6.1.1.14"/>
    </reaction>
</comment>
<comment type="subunit">
    <text evidence="1">Tetramer of two alpha and two beta subunits.</text>
</comment>
<comment type="subcellular location">
    <subcellularLocation>
        <location evidence="1">Cytoplasm</location>
    </subcellularLocation>
</comment>
<comment type="similarity">
    <text evidence="1">Belongs to the class-II aminoacyl-tRNA synthetase family.</text>
</comment>
<protein>
    <recommendedName>
        <fullName evidence="1">Glycine--tRNA ligase alpha subunit</fullName>
        <ecNumber evidence="1">6.1.1.14</ecNumber>
    </recommendedName>
    <alternativeName>
        <fullName evidence="1">Glycyl-tRNA synthetase alpha subunit</fullName>
        <shortName evidence="1">GlyRS</shortName>
    </alternativeName>
</protein>
<sequence length="295" mass="34174">MNIQEMILTLQKHWSNEGCVLLQSYDVEKGAGTMSPYTFLRSLGPEPWKVAYVEPSRRPADGRYGDNPNRLYQHHQFQVIIKPSPDNIQELYLDSLKALGIDPLEHDIRFVEDNWENPSLGCAGLGWEVWLDGMEITQFTYFQQVGGLECKPVSVEITYGIERLASYIQDKENVFDLEWTNGYTIKDLFKMAEYEHSVYTFETSDVDMLFELFATYEKEANRQMDQGLVHPAYDYVLKCSHTFNLLDAKGAISVTERTGYIARVRNLARKVAKTYYDEREKLGFPMLKEEEASHE</sequence>